<feature type="chain" id="PRO_0000317985" description="Autophagy-related protein 17">
    <location>
        <begin position="1"/>
        <end position="554"/>
    </location>
</feature>
<feature type="region of interest" description="Disordered" evidence="3">
    <location>
        <begin position="1"/>
        <end position="22"/>
    </location>
</feature>
<feature type="region of interest" description="Disordered" evidence="3">
    <location>
        <begin position="490"/>
        <end position="529"/>
    </location>
</feature>
<feature type="coiled-coil region" evidence="2">
    <location>
        <begin position="327"/>
        <end position="353"/>
    </location>
</feature>
<feature type="compositionally biased region" description="Low complexity" evidence="3">
    <location>
        <begin position="1"/>
        <end position="10"/>
    </location>
</feature>
<evidence type="ECO:0000250" key="1"/>
<evidence type="ECO:0000255" key="2"/>
<evidence type="ECO:0000256" key="3">
    <source>
        <dbReference type="SAM" id="MobiDB-lite"/>
    </source>
</evidence>
<evidence type="ECO:0000269" key="4">
    <source>
    </source>
</evidence>
<evidence type="ECO:0000305" key="5"/>
<protein>
    <recommendedName>
        <fullName>Autophagy-related protein 17</fullName>
    </recommendedName>
</protein>
<gene>
    <name type="primary">atg17</name>
    <name type="ORF">Pc12g12840</name>
</gene>
<organism>
    <name type="scientific">Penicillium rubens (strain ATCC 28089 / DSM 1075 / NRRL 1951 / Wisconsin 54-1255)</name>
    <name type="common">Penicillium chrysogenum</name>
    <dbReference type="NCBI Taxonomy" id="500485"/>
    <lineage>
        <taxon>Eukaryota</taxon>
        <taxon>Fungi</taxon>
        <taxon>Dikarya</taxon>
        <taxon>Ascomycota</taxon>
        <taxon>Pezizomycotina</taxon>
        <taxon>Eurotiomycetes</taxon>
        <taxon>Eurotiomycetidae</taxon>
        <taxon>Eurotiales</taxon>
        <taxon>Aspergillaceae</taxon>
        <taxon>Penicillium</taxon>
        <taxon>Penicillium chrysogenum species complex</taxon>
    </lineage>
</organism>
<accession>A7KAM6</accession>
<accession>B6GZA0</accession>
<sequence>MASSQSSSSSIRPQAGLNEGDHQSLPQLDTLISYLLGAKRSLSSITHVWRANEIVTASHSALEKSVVLCSRTGFLRRGLNGQLRLLYDVRSEVEQISYRGRDEFSIALKNLDAADARLKHTLDLLRGTIVHASFRPGDEEQKSLHDFVDERGVEELHASLKASIDRTNTARAELDTSNHEFDDELQAIKKSLRHYHTATKLASSRLSITSSSSSASDSGLLTLSSMPGQIQSLEAHAQEMATLLEALVRHFDLCVTAVKHTDGGGAVARSITGDMPAGVDGSNDGMPNIGAEINANLNAPLDPMTDAEYQEMVAVLIKDAPEADDVVMEIQDRINEMESIFEQVQAQRDALLSISKATIEVHSHLSSLASSRLPRYISQAHNFTRVWLEENDRINSGLVELSDLHSLYDGFLNAYDSLMLEVARRRHVRQRVEKVLRDTRHKLDQLHDEDAAARETFRAEQGDFLPSDIWPGVGLAPMQVQFTRLSGGQLDGGPIGQKPLEEPSGGEYAGAAKAGVSDGSAEGEQIPDLPRHLVEEAYARVKARNKVASQLHTV</sequence>
<keyword id="KW-0072">Autophagy</keyword>
<keyword id="KW-0175">Coiled coil</keyword>
<keyword id="KW-0963">Cytoplasm</keyword>
<keyword id="KW-0472">Membrane</keyword>
<keyword id="KW-1185">Reference proteome</keyword>
<reference key="1">
    <citation type="journal article" date="2007" name="Autophagy">
        <title>ATG genes involved in non-selective autophagy are conserved from yeast to man, but the selective Cvt and pexophagy pathways also require organism-specific genes.</title>
        <authorList>
            <person name="Meijer W.H."/>
            <person name="van der Klei I.J."/>
            <person name="Veenhuis M."/>
            <person name="Kiel J.A.K.W."/>
        </authorList>
    </citation>
    <scope>NUCLEOTIDE SEQUENCE [GENOMIC DNA]</scope>
    <scope>FUNCTION</scope>
</reference>
<reference key="2">
    <citation type="journal article" date="2008" name="Nat. Biotechnol.">
        <title>Genome sequencing and analysis of the filamentous fungus Penicillium chrysogenum.</title>
        <authorList>
            <person name="van den Berg M.A."/>
            <person name="Albang R."/>
            <person name="Albermann K."/>
            <person name="Badger J.H."/>
            <person name="Daran J.-M."/>
            <person name="Driessen A.J.M."/>
            <person name="Garcia-Estrada C."/>
            <person name="Fedorova N.D."/>
            <person name="Harris D.M."/>
            <person name="Heijne W.H.M."/>
            <person name="Joardar V.S."/>
            <person name="Kiel J.A.K.W."/>
            <person name="Kovalchuk A."/>
            <person name="Martin J.F."/>
            <person name="Nierman W.C."/>
            <person name="Nijland J.G."/>
            <person name="Pronk J.T."/>
            <person name="Roubos J.A."/>
            <person name="van der Klei I.J."/>
            <person name="van Peij N.N.M.E."/>
            <person name="Veenhuis M."/>
            <person name="von Doehren H."/>
            <person name="Wagner C."/>
            <person name="Wortman J.R."/>
            <person name="Bovenberg R.A.L."/>
        </authorList>
    </citation>
    <scope>NUCLEOTIDE SEQUENCE [LARGE SCALE GENOMIC DNA]</scope>
    <source>
        <strain>ATCC 28089 / DSM 1075 / NRRL 1951 / Wisconsin 54-1255</strain>
    </source>
</reference>
<name>ATG17_PENRW</name>
<dbReference type="EMBL" id="EF110892">
    <property type="protein sequence ID" value="ABO31313.1"/>
    <property type="molecule type" value="Genomic_DNA"/>
</dbReference>
<dbReference type="EMBL" id="AM920427">
    <property type="protein sequence ID" value="CAP80911.1"/>
    <property type="molecule type" value="Genomic_DNA"/>
</dbReference>
<dbReference type="RefSeq" id="XP_002558092.1">
    <property type="nucleotide sequence ID" value="XM_002558046.1"/>
</dbReference>
<dbReference type="SMR" id="A7KAM6"/>
<dbReference type="STRING" id="500485.A7KAM6"/>
<dbReference type="GeneID" id="8317407"/>
<dbReference type="KEGG" id="pcs:N7525_001312"/>
<dbReference type="VEuPathDB" id="FungiDB:PCH_Pc12g12840"/>
<dbReference type="eggNOG" id="ENOG502RYHP">
    <property type="taxonomic scope" value="Eukaryota"/>
</dbReference>
<dbReference type="HOGENOM" id="CLU_028356_0_0_1"/>
<dbReference type="OMA" id="THVWRAN"/>
<dbReference type="OrthoDB" id="1937984at2759"/>
<dbReference type="BioCyc" id="PCHR:PC12G12840-MONOMER"/>
<dbReference type="Proteomes" id="UP000000724">
    <property type="component" value="Contig Pc00c12"/>
</dbReference>
<dbReference type="GO" id="GO:1990316">
    <property type="term" value="C:Atg1/ULK1 kinase complex"/>
    <property type="evidence" value="ECO:0007669"/>
    <property type="project" value="TreeGrafter"/>
</dbReference>
<dbReference type="GO" id="GO:0034045">
    <property type="term" value="C:phagophore assembly site membrane"/>
    <property type="evidence" value="ECO:0007669"/>
    <property type="project" value="UniProtKB-SubCell"/>
</dbReference>
<dbReference type="GO" id="GO:0060090">
    <property type="term" value="F:molecular adaptor activity"/>
    <property type="evidence" value="ECO:0007669"/>
    <property type="project" value="TreeGrafter"/>
</dbReference>
<dbReference type="GO" id="GO:0030295">
    <property type="term" value="F:protein kinase activator activity"/>
    <property type="evidence" value="ECO:0007669"/>
    <property type="project" value="TreeGrafter"/>
</dbReference>
<dbReference type="GO" id="GO:0000045">
    <property type="term" value="P:autophagosome assembly"/>
    <property type="evidence" value="ECO:0007669"/>
    <property type="project" value="TreeGrafter"/>
</dbReference>
<dbReference type="GO" id="GO:0000422">
    <property type="term" value="P:autophagy of mitochondrion"/>
    <property type="evidence" value="ECO:0007669"/>
    <property type="project" value="TreeGrafter"/>
</dbReference>
<dbReference type="GO" id="GO:0034727">
    <property type="term" value="P:piecemeal microautophagy of the nucleus"/>
    <property type="evidence" value="ECO:0007669"/>
    <property type="project" value="TreeGrafter"/>
</dbReference>
<dbReference type="InterPro" id="IPR007240">
    <property type="entry name" value="Atg17"/>
</dbReference>
<dbReference type="InterPro" id="IPR045326">
    <property type="entry name" value="ATG17-like_dom"/>
</dbReference>
<dbReference type="PANTHER" id="PTHR28005">
    <property type="entry name" value="AUTOPHAGY-RELATED PROTEIN 17"/>
    <property type="match status" value="1"/>
</dbReference>
<dbReference type="PANTHER" id="PTHR28005:SF1">
    <property type="entry name" value="AUTOPHAGY-RELATED PROTEIN 17"/>
    <property type="match status" value="1"/>
</dbReference>
<dbReference type="Pfam" id="PF04108">
    <property type="entry name" value="ATG17_like"/>
    <property type="match status" value="1"/>
</dbReference>
<comment type="function">
    <text evidence="1 4">Autophagy-specific protein that functions in response to autophagy-inducing signals as a scaffold to recruit other ATG proteins to organize pre-autophagosomal structure (PAS) formation. Modulates the timing and magnitude of the autophagy response, such as the size of the sequestering vesicles. Plays particularly a role in pexophagy and nucleophagy (By similarity).</text>
</comment>
<comment type="subcellular location">
    <subcellularLocation>
        <location evidence="1">Cytoplasm</location>
    </subcellularLocation>
    <subcellularLocation>
        <location evidence="1">Preautophagosomal structure membrane</location>
        <topology evidence="1">Peripheral membrane protein</topology>
    </subcellularLocation>
</comment>
<comment type="similarity">
    <text evidence="5">Belongs to the ATG17 family.</text>
</comment>
<proteinExistence type="inferred from homology"/>